<reference key="1">
    <citation type="journal article" date="2002" name="DNA Res.">
        <title>Complete genomic sequence of nitrogen-fixing symbiotic bacterium Bradyrhizobium japonicum USDA110.</title>
        <authorList>
            <person name="Kaneko T."/>
            <person name="Nakamura Y."/>
            <person name="Sato S."/>
            <person name="Minamisawa K."/>
            <person name="Uchiumi T."/>
            <person name="Sasamoto S."/>
            <person name="Watanabe A."/>
            <person name="Idesawa K."/>
            <person name="Iriguchi M."/>
            <person name="Kawashima K."/>
            <person name="Kohara M."/>
            <person name="Matsumoto M."/>
            <person name="Shimpo S."/>
            <person name="Tsuruoka H."/>
            <person name="Wada T."/>
            <person name="Yamada M."/>
            <person name="Tabata S."/>
        </authorList>
    </citation>
    <scope>NUCLEOTIDE SEQUENCE [LARGE SCALE GENOMIC DNA]</scope>
    <source>
        <strain>JCM 10833 / BCRC 13528 / IAM 13628 / NBRC 14792 / USDA 110</strain>
    </source>
</reference>
<name>RPIA_BRADU</name>
<protein>
    <recommendedName>
        <fullName evidence="1">Ribose-5-phosphate isomerase A</fullName>
        <ecNumber evidence="1">5.3.1.6</ecNumber>
    </recommendedName>
    <alternativeName>
        <fullName evidence="1">Phosphoriboisomerase A</fullName>
        <shortName evidence="1">PRI</shortName>
    </alternativeName>
</protein>
<comment type="function">
    <text evidence="1">Catalyzes the reversible conversion of ribose-5-phosphate to ribulose 5-phosphate.</text>
</comment>
<comment type="catalytic activity">
    <reaction evidence="1">
        <text>aldehydo-D-ribose 5-phosphate = D-ribulose 5-phosphate</text>
        <dbReference type="Rhea" id="RHEA:14657"/>
        <dbReference type="ChEBI" id="CHEBI:58121"/>
        <dbReference type="ChEBI" id="CHEBI:58273"/>
        <dbReference type="EC" id="5.3.1.6"/>
    </reaction>
</comment>
<comment type="pathway">
    <text evidence="1">Carbohydrate degradation; pentose phosphate pathway; D-ribose 5-phosphate from D-ribulose 5-phosphate (non-oxidative stage): step 1/1.</text>
</comment>
<comment type="subunit">
    <text evidence="1">Homodimer.</text>
</comment>
<comment type="similarity">
    <text evidence="1">Belongs to the ribose 5-phosphate isomerase family.</text>
</comment>
<proteinExistence type="inferred from homology"/>
<organism>
    <name type="scientific">Bradyrhizobium diazoefficiens (strain JCM 10833 / BCRC 13528 / IAM 13628 / NBRC 14792 / USDA 110)</name>
    <dbReference type="NCBI Taxonomy" id="224911"/>
    <lineage>
        <taxon>Bacteria</taxon>
        <taxon>Pseudomonadati</taxon>
        <taxon>Pseudomonadota</taxon>
        <taxon>Alphaproteobacteria</taxon>
        <taxon>Hyphomicrobiales</taxon>
        <taxon>Nitrobacteraceae</taxon>
        <taxon>Bradyrhizobium</taxon>
    </lineage>
</organism>
<keyword id="KW-0413">Isomerase</keyword>
<keyword id="KW-1185">Reference proteome</keyword>
<sequence>MNMDQLKRQAAARALEEVRDGMQLGLGTGSTAKHFVELLGERVAAGLKVIGVPTSEATRLDATRCGVPLTTLDEIDHLDITVDGADEIDPELNLIKGGGGALLREKIVAAASDRMIVIADDTKWVPTLGRFPLPIEVIPFGLGATRRAIETAFAQCGVSGQMAVRKAKGGDKDGHVFVTDGGHWILDAQLGRIVDPPSLAKALSAIPGVVEHGLFIGLASSAVLAGGEGIRVIERRKPKGD</sequence>
<evidence type="ECO:0000255" key="1">
    <source>
        <dbReference type="HAMAP-Rule" id="MF_00170"/>
    </source>
</evidence>
<gene>
    <name evidence="1" type="primary">rpiA</name>
    <name type="ordered locus">blr3755</name>
</gene>
<accession>Q89NS9</accession>
<feature type="chain" id="PRO_0000158395" description="Ribose-5-phosphate isomerase A">
    <location>
        <begin position="1"/>
        <end position="241"/>
    </location>
</feature>
<feature type="active site" description="Proton acceptor" evidence="1">
    <location>
        <position position="105"/>
    </location>
</feature>
<feature type="binding site" evidence="1">
    <location>
        <begin position="28"/>
        <end position="31"/>
    </location>
    <ligand>
        <name>substrate</name>
    </ligand>
</feature>
<feature type="binding site" evidence="1">
    <location>
        <begin position="83"/>
        <end position="86"/>
    </location>
    <ligand>
        <name>substrate</name>
    </ligand>
</feature>
<feature type="binding site" evidence="1">
    <location>
        <begin position="96"/>
        <end position="99"/>
    </location>
    <ligand>
        <name>substrate</name>
    </ligand>
</feature>
<feature type="binding site" evidence="1">
    <location>
        <position position="123"/>
    </location>
    <ligand>
        <name>substrate</name>
    </ligand>
</feature>
<dbReference type="EC" id="5.3.1.6" evidence="1"/>
<dbReference type="EMBL" id="BA000040">
    <property type="protein sequence ID" value="BAC49020.1"/>
    <property type="molecule type" value="Genomic_DNA"/>
</dbReference>
<dbReference type="RefSeq" id="NP_770395.1">
    <property type="nucleotide sequence ID" value="NC_004463.1"/>
</dbReference>
<dbReference type="RefSeq" id="WP_011086536.1">
    <property type="nucleotide sequence ID" value="NC_004463.1"/>
</dbReference>
<dbReference type="SMR" id="Q89NS9"/>
<dbReference type="FunCoup" id="Q89NS9">
    <property type="interactions" value="537"/>
</dbReference>
<dbReference type="STRING" id="224911.AAV28_15740"/>
<dbReference type="EnsemblBacteria" id="BAC49020">
    <property type="protein sequence ID" value="BAC49020"/>
    <property type="gene ID" value="BAC49020"/>
</dbReference>
<dbReference type="GeneID" id="46490758"/>
<dbReference type="KEGG" id="bja:blr3755"/>
<dbReference type="PATRIC" id="fig|224911.44.peg.3418"/>
<dbReference type="eggNOG" id="COG0120">
    <property type="taxonomic scope" value="Bacteria"/>
</dbReference>
<dbReference type="HOGENOM" id="CLU_056590_1_0_5"/>
<dbReference type="InParanoid" id="Q89NS9"/>
<dbReference type="OrthoDB" id="5870696at2"/>
<dbReference type="PhylomeDB" id="Q89NS9"/>
<dbReference type="UniPathway" id="UPA00115">
    <property type="reaction ID" value="UER00412"/>
</dbReference>
<dbReference type="Proteomes" id="UP000002526">
    <property type="component" value="Chromosome"/>
</dbReference>
<dbReference type="GO" id="GO:0004751">
    <property type="term" value="F:ribose-5-phosphate isomerase activity"/>
    <property type="evidence" value="ECO:0007669"/>
    <property type="project" value="UniProtKB-UniRule"/>
</dbReference>
<dbReference type="GO" id="GO:0009052">
    <property type="term" value="P:pentose-phosphate shunt, non-oxidative branch"/>
    <property type="evidence" value="ECO:0007669"/>
    <property type="project" value="UniProtKB-UniRule"/>
</dbReference>
<dbReference type="CDD" id="cd01398">
    <property type="entry name" value="RPI_A"/>
    <property type="match status" value="1"/>
</dbReference>
<dbReference type="FunFam" id="3.40.50.1360:FF:000001">
    <property type="entry name" value="Ribose-5-phosphate isomerase A"/>
    <property type="match status" value="1"/>
</dbReference>
<dbReference type="Gene3D" id="3.30.70.260">
    <property type="match status" value="1"/>
</dbReference>
<dbReference type="Gene3D" id="3.40.50.1360">
    <property type="match status" value="1"/>
</dbReference>
<dbReference type="HAMAP" id="MF_00170">
    <property type="entry name" value="Rib_5P_isom_A"/>
    <property type="match status" value="1"/>
</dbReference>
<dbReference type="InterPro" id="IPR037171">
    <property type="entry name" value="NagB/RpiA_transferase-like"/>
</dbReference>
<dbReference type="InterPro" id="IPR050262">
    <property type="entry name" value="Ribose-5P_isomerase"/>
</dbReference>
<dbReference type="InterPro" id="IPR020672">
    <property type="entry name" value="Ribose5P_isomerase_typA_subgr"/>
</dbReference>
<dbReference type="InterPro" id="IPR004788">
    <property type="entry name" value="Ribose5P_isomerase_type_A"/>
</dbReference>
<dbReference type="NCBIfam" id="NF001924">
    <property type="entry name" value="PRK00702.1"/>
    <property type="match status" value="1"/>
</dbReference>
<dbReference type="NCBIfam" id="TIGR00021">
    <property type="entry name" value="rpiA"/>
    <property type="match status" value="1"/>
</dbReference>
<dbReference type="PANTHER" id="PTHR43748">
    <property type="entry name" value="RIBOSE-5-PHOSPHATE ISOMERASE 3, CHLOROPLASTIC-RELATED"/>
    <property type="match status" value="1"/>
</dbReference>
<dbReference type="PANTHER" id="PTHR43748:SF3">
    <property type="entry name" value="RIBOSE-5-PHOSPHATE ISOMERASE 3, CHLOROPLASTIC-RELATED"/>
    <property type="match status" value="1"/>
</dbReference>
<dbReference type="Pfam" id="PF06026">
    <property type="entry name" value="Rib_5-P_isom_A"/>
    <property type="match status" value="1"/>
</dbReference>
<dbReference type="SUPFAM" id="SSF75445">
    <property type="entry name" value="D-ribose-5-phosphate isomerase (RpiA), lid domain"/>
    <property type="match status" value="1"/>
</dbReference>
<dbReference type="SUPFAM" id="SSF100950">
    <property type="entry name" value="NagB/RpiA/CoA transferase-like"/>
    <property type="match status" value="1"/>
</dbReference>